<dbReference type="EMBL" id="CP000606">
    <property type="protein sequence ID" value="ABO22139.1"/>
    <property type="molecule type" value="Genomic_DNA"/>
</dbReference>
<dbReference type="RefSeq" id="WP_011864073.1">
    <property type="nucleotide sequence ID" value="NC_009092.1"/>
</dbReference>
<dbReference type="SMR" id="A3Q9J1"/>
<dbReference type="STRING" id="323850.Shew_0267"/>
<dbReference type="KEGG" id="slo:Shew_0267"/>
<dbReference type="eggNOG" id="COG3074">
    <property type="taxonomic scope" value="Bacteria"/>
</dbReference>
<dbReference type="HOGENOM" id="CLU_171174_1_0_6"/>
<dbReference type="OrthoDB" id="6554593at2"/>
<dbReference type="Proteomes" id="UP000001558">
    <property type="component" value="Chromosome"/>
</dbReference>
<dbReference type="GO" id="GO:0005737">
    <property type="term" value="C:cytoplasm"/>
    <property type="evidence" value="ECO:0007669"/>
    <property type="project" value="UniProtKB-SubCell"/>
</dbReference>
<dbReference type="GO" id="GO:0000917">
    <property type="term" value="P:division septum assembly"/>
    <property type="evidence" value="ECO:0007669"/>
    <property type="project" value="UniProtKB-KW"/>
</dbReference>
<dbReference type="GO" id="GO:0043093">
    <property type="term" value="P:FtsZ-dependent cytokinesis"/>
    <property type="evidence" value="ECO:0007669"/>
    <property type="project" value="UniProtKB-UniRule"/>
</dbReference>
<dbReference type="Gene3D" id="1.20.5.340">
    <property type="match status" value="1"/>
</dbReference>
<dbReference type="HAMAP" id="MF_01196">
    <property type="entry name" value="ZapB"/>
    <property type="match status" value="1"/>
</dbReference>
<dbReference type="InterPro" id="IPR009252">
    <property type="entry name" value="Cell_div_ZapB"/>
</dbReference>
<dbReference type="Pfam" id="PF06005">
    <property type="entry name" value="ZapB"/>
    <property type="match status" value="1"/>
</dbReference>
<reference key="1">
    <citation type="submission" date="2007-03" db="EMBL/GenBank/DDBJ databases">
        <title>Complete sequence of Shewanella loihica PV-4.</title>
        <authorList>
            <consortium name="US DOE Joint Genome Institute"/>
            <person name="Copeland A."/>
            <person name="Lucas S."/>
            <person name="Lapidus A."/>
            <person name="Barry K."/>
            <person name="Detter J.C."/>
            <person name="Glavina del Rio T."/>
            <person name="Hammon N."/>
            <person name="Israni S."/>
            <person name="Dalin E."/>
            <person name="Tice H."/>
            <person name="Pitluck S."/>
            <person name="Chain P."/>
            <person name="Malfatti S."/>
            <person name="Shin M."/>
            <person name="Vergez L."/>
            <person name="Schmutz J."/>
            <person name="Larimer F."/>
            <person name="Land M."/>
            <person name="Hauser L."/>
            <person name="Kyrpides N."/>
            <person name="Mikhailova N."/>
            <person name="Romine M.F."/>
            <person name="Serres G."/>
            <person name="Fredrickson J."/>
            <person name="Tiedje J."/>
            <person name="Richardson P."/>
        </authorList>
    </citation>
    <scope>NUCLEOTIDE SEQUENCE [LARGE SCALE GENOMIC DNA]</scope>
    <source>
        <strain>ATCC BAA-1088 / PV-4</strain>
    </source>
</reference>
<evidence type="ECO:0000255" key="1">
    <source>
        <dbReference type="HAMAP-Rule" id="MF_01196"/>
    </source>
</evidence>
<gene>
    <name evidence="1" type="primary">zapB</name>
    <name type="ordered locus">Shew_0267</name>
</gene>
<protein>
    <recommendedName>
        <fullName evidence="1">Cell division protein ZapB</fullName>
    </recommendedName>
</protein>
<accession>A3Q9J1</accession>
<organism>
    <name type="scientific">Shewanella loihica (strain ATCC BAA-1088 / PV-4)</name>
    <dbReference type="NCBI Taxonomy" id="323850"/>
    <lineage>
        <taxon>Bacteria</taxon>
        <taxon>Pseudomonadati</taxon>
        <taxon>Pseudomonadota</taxon>
        <taxon>Gammaproteobacteria</taxon>
        <taxon>Alteromonadales</taxon>
        <taxon>Shewanellaceae</taxon>
        <taxon>Shewanella</taxon>
    </lineage>
</organism>
<feature type="chain" id="PRO_0000333926" description="Cell division protein ZapB">
    <location>
        <begin position="1"/>
        <end position="68"/>
    </location>
</feature>
<feature type="coiled-coil region" evidence="1">
    <location>
        <begin position="3"/>
        <end position="58"/>
    </location>
</feature>
<keyword id="KW-0131">Cell cycle</keyword>
<keyword id="KW-0132">Cell division</keyword>
<keyword id="KW-0175">Coiled coil</keyword>
<keyword id="KW-0963">Cytoplasm</keyword>
<keyword id="KW-1185">Reference proteome</keyword>
<keyword id="KW-0717">Septation</keyword>
<sequence>MSLELLSKLETKIQAALETIELLKMELEEEKQKNHTLNEQNQQLSQDLTSWNEKVTGLVGLLNDEVSE</sequence>
<comment type="function">
    <text evidence="1">Non-essential, abundant cell division factor that is required for proper Z-ring formation. It is recruited early to the divisome by direct interaction with FtsZ, stimulating Z-ring assembly and thereby promoting cell division earlier in the cell cycle. Its recruitment to the Z-ring requires functional FtsA or ZipA.</text>
</comment>
<comment type="subunit">
    <text evidence="1">Homodimer. The ends of the coiled-coil dimer bind to each other, forming polymers. Interacts with FtsZ.</text>
</comment>
<comment type="subcellular location">
    <subcellularLocation>
        <location>Cytoplasm</location>
    </subcellularLocation>
    <text evidence="1">Localizes to the septum at mid-cell, in a FtsZ-like pattern.</text>
</comment>
<comment type="similarity">
    <text evidence="1">Belongs to the ZapB family.</text>
</comment>
<proteinExistence type="inferred from homology"/>
<name>ZAPB_SHELP</name>